<dbReference type="EMBL" id="AF110788">
    <property type="protein sequence ID" value="AAD55570.1"/>
    <property type="molecule type" value="mRNA"/>
</dbReference>
<dbReference type="SMR" id="Q9SBM8"/>
<dbReference type="KEGG" id="vcn:VOLCADRAFT_105437"/>
<dbReference type="OMA" id="IGWAATC"/>
<dbReference type="GO" id="GO:0009535">
    <property type="term" value="C:chloroplast thylakoid membrane"/>
    <property type="evidence" value="ECO:0007669"/>
    <property type="project" value="UniProtKB-SubCell"/>
</dbReference>
<dbReference type="GO" id="GO:0009512">
    <property type="term" value="C:cytochrome b6f complex"/>
    <property type="evidence" value="ECO:0007669"/>
    <property type="project" value="InterPro"/>
</dbReference>
<dbReference type="GO" id="GO:0045158">
    <property type="term" value="F:electron transporter, transferring electrons within cytochrome b6/f complex of photosystem II activity"/>
    <property type="evidence" value="ECO:0007669"/>
    <property type="project" value="InterPro"/>
</dbReference>
<dbReference type="GO" id="GO:0017004">
    <property type="term" value="P:cytochrome complex assembly"/>
    <property type="evidence" value="ECO:0007669"/>
    <property type="project" value="InterPro"/>
</dbReference>
<dbReference type="GO" id="GO:0015979">
    <property type="term" value="P:photosynthesis"/>
    <property type="evidence" value="ECO:0007669"/>
    <property type="project" value="UniProtKB-KW"/>
</dbReference>
<dbReference type="HAMAP" id="MF_00395">
    <property type="entry name" value="Cytb6_f_PetN"/>
    <property type="match status" value="1"/>
</dbReference>
<dbReference type="InterPro" id="IPR036143">
    <property type="entry name" value="Cytochr_b6-f_cplx_su8_sf"/>
</dbReference>
<dbReference type="InterPro" id="IPR005497">
    <property type="entry name" value="Cytochrome_b6-f_cplx_su8"/>
</dbReference>
<dbReference type="Pfam" id="PF03742">
    <property type="entry name" value="PetN"/>
    <property type="match status" value="1"/>
</dbReference>
<dbReference type="SUPFAM" id="SSF103451">
    <property type="entry name" value="PetN subunit of the cytochrome b6f complex"/>
    <property type="match status" value="1"/>
</dbReference>
<organism>
    <name type="scientific">Volvox carteri</name>
    <name type="common">Green alga</name>
    <dbReference type="NCBI Taxonomy" id="3067"/>
    <lineage>
        <taxon>Eukaryota</taxon>
        <taxon>Viridiplantae</taxon>
        <taxon>Chlorophyta</taxon>
        <taxon>core chlorophytes</taxon>
        <taxon>Chlorophyceae</taxon>
        <taxon>CS clade</taxon>
        <taxon>Chlamydomonadales</taxon>
        <taxon>Volvocaceae</taxon>
        <taxon>Volvox</taxon>
    </lineage>
</organism>
<feature type="transit peptide" description="Chloroplast" evidence="2">
    <location>
        <begin position="1"/>
        <end position="67"/>
    </location>
</feature>
<feature type="chain" id="PRO_0000235306" description="Cytochrome b6-f complex subunit 8, chloroplastic">
    <location>
        <begin position="68"/>
        <end position="98"/>
    </location>
</feature>
<feature type="transmembrane region" description="Helical" evidence="2">
    <location>
        <begin position="72"/>
        <end position="92"/>
    </location>
</feature>
<keyword id="KW-0150">Chloroplast</keyword>
<keyword id="KW-0249">Electron transport</keyword>
<keyword id="KW-0472">Membrane</keyword>
<keyword id="KW-0602">Photosynthesis</keyword>
<keyword id="KW-0934">Plastid</keyword>
<keyword id="KW-0793">Thylakoid</keyword>
<keyword id="KW-0809">Transit peptide</keyword>
<keyword id="KW-0812">Transmembrane</keyword>
<keyword id="KW-1133">Transmembrane helix</keyword>
<keyword id="KW-0813">Transport</keyword>
<sequence length="98" mass="10067">MQCVSRVAQRSAVSRPRVASRQAVKVQAVKPAEQKAAMAAVAATASTLALALAPAAQAAQEVAMLAEGEPAIVQIGWAATCVMFSFSLSLVVWGRSGL</sequence>
<gene>
    <name type="primary">PETN</name>
</gene>
<comment type="function">
    <text evidence="1">Component of the cytochrome b6-f complex, which mediates electron transfer between photosystem II (PSII) and photosystem I (PSI), cyclic electron flow around PSI, and state transitions.</text>
</comment>
<comment type="subunit">
    <text evidence="1">The 4 large subunits of the cytochrome b6-f complex are cytochrome b6, subunit IV (17 kDa polypeptide, PetD), cytochrome f and the Rieske protein, while the 4 small subunits are PetG, PetL, PetM and PetN. The complex functions as a dimer (By similarity).</text>
</comment>
<comment type="subcellular location">
    <subcellularLocation>
        <location evidence="1">Plastid</location>
        <location evidence="1">Chloroplast thylakoid membrane</location>
        <topology evidence="1">Single-pass membrane protein</topology>
    </subcellularLocation>
</comment>
<comment type="miscellaneous">
    <text>Unlike its orthologs this protein is not encoded in the chloroplast.</text>
</comment>
<comment type="similarity">
    <text evidence="3">Belongs to the PetN family.</text>
</comment>
<proteinExistence type="inferred from homology"/>
<accession>Q9SBM8</accession>
<name>PETN_VOLCA</name>
<evidence type="ECO:0000250" key="1"/>
<evidence type="ECO:0000255" key="2"/>
<evidence type="ECO:0000305" key="3"/>
<protein>
    <recommendedName>
        <fullName>Cytochrome b6-f complex subunit 8, chloroplastic</fullName>
    </recommendedName>
    <alternativeName>
        <fullName>Cytochrome b6-f complex subunit PetN</fullName>
    </alternativeName>
    <alternativeName>
        <fullName>Cytochrome b6-f complex subunit VIII</fullName>
    </alternativeName>
</protein>
<reference key="1">
    <citation type="journal article" date="1999" name="Curr. Genet.">
        <title>Volvox germline-specific genes that are putative targets of RegA repression encode chloroplast proteins.</title>
        <authorList>
            <person name="Meissner M."/>
            <person name="Stark K."/>
            <person name="Cresnar B."/>
            <person name="Kirk D.L."/>
            <person name="Schmitt R."/>
        </authorList>
    </citation>
    <scope>NUCLEOTIDE SEQUENCE [MRNA]</scope>
    <source>
        <strain>f. Nagariensis</strain>
    </source>
</reference>